<sequence>MKRSKSSRRWLDEHVNDPFVKRAQKDGLRSRSSYKLIELNEKDKLIRPGMLVMDLGSAPGGWSQVAGGIVGEKGRVLATDILPMGGLDNVDFVQGDFTEDAVFQQILDMLDGRQPDLIVSDIAPNISGVAAADQAASMYLVELTLDMVRQVLKPGGNYVVKVFQGEGSDEFLKDVRSSFEKVVIRKPEASRPRSREVYLVAKGFKG</sequence>
<protein>
    <recommendedName>
        <fullName evidence="1">Ribosomal RNA large subunit methyltransferase E</fullName>
        <ecNumber evidence="1">2.1.1.166</ecNumber>
    </recommendedName>
    <alternativeName>
        <fullName evidence="1">23S rRNA Um2552 methyltransferase</fullName>
    </alternativeName>
    <alternativeName>
        <fullName evidence="1">rRNA (uridine-2'-O-)-methyltransferase</fullName>
    </alternativeName>
</protein>
<name>RLME_STUS1</name>
<organism>
    <name type="scientific">Stutzerimonas stutzeri (strain A1501)</name>
    <name type="common">Pseudomonas stutzeri</name>
    <dbReference type="NCBI Taxonomy" id="379731"/>
    <lineage>
        <taxon>Bacteria</taxon>
        <taxon>Pseudomonadati</taxon>
        <taxon>Pseudomonadota</taxon>
        <taxon>Gammaproteobacteria</taxon>
        <taxon>Pseudomonadales</taxon>
        <taxon>Pseudomonadaceae</taxon>
        <taxon>Stutzerimonas</taxon>
    </lineage>
</organism>
<feature type="chain" id="PRO_0000300597" description="Ribosomal RNA large subunit methyltransferase E">
    <location>
        <begin position="1"/>
        <end position="206"/>
    </location>
</feature>
<feature type="active site" description="Proton acceptor" evidence="1">
    <location>
        <position position="161"/>
    </location>
</feature>
<feature type="binding site" evidence="1">
    <location>
        <position position="60"/>
    </location>
    <ligand>
        <name>S-adenosyl-L-methionine</name>
        <dbReference type="ChEBI" id="CHEBI:59789"/>
    </ligand>
</feature>
<feature type="binding site" evidence="1">
    <location>
        <position position="62"/>
    </location>
    <ligand>
        <name>S-adenosyl-L-methionine</name>
        <dbReference type="ChEBI" id="CHEBI:59789"/>
    </ligand>
</feature>
<feature type="binding site" evidence="1">
    <location>
        <position position="80"/>
    </location>
    <ligand>
        <name>S-adenosyl-L-methionine</name>
        <dbReference type="ChEBI" id="CHEBI:59789"/>
    </ligand>
</feature>
<feature type="binding site" evidence="1">
    <location>
        <position position="96"/>
    </location>
    <ligand>
        <name>S-adenosyl-L-methionine</name>
        <dbReference type="ChEBI" id="CHEBI:59789"/>
    </ligand>
</feature>
<feature type="binding site" evidence="1">
    <location>
        <position position="121"/>
    </location>
    <ligand>
        <name>S-adenosyl-L-methionine</name>
        <dbReference type="ChEBI" id="CHEBI:59789"/>
    </ligand>
</feature>
<accession>A4VNP3</accession>
<gene>
    <name evidence="1" type="primary">rlmE</name>
    <name evidence="1" type="synonym">ftsJ</name>
    <name evidence="1" type="synonym">rrmJ</name>
    <name type="ordered locus">PST_2948</name>
</gene>
<reference key="1">
    <citation type="journal article" date="2008" name="Proc. Natl. Acad. Sci. U.S.A.">
        <title>Nitrogen fixation island and rhizosphere competence traits in the genome of root-associated Pseudomonas stutzeri A1501.</title>
        <authorList>
            <person name="Yan Y."/>
            <person name="Yang J."/>
            <person name="Dou Y."/>
            <person name="Chen M."/>
            <person name="Ping S."/>
            <person name="Peng J."/>
            <person name="Lu W."/>
            <person name="Zhang W."/>
            <person name="Yao Z."/>
            <person name="Li H."/>
            <person name="Liu W."/>
            <person name="He S."/>
            <person name="Geng L."/>
            <person name="Zhang X."/>
            <person name="Yang F."/>
            <person name="Yu H."/>
            <person name="Zhan Y."/>
            <person name="Li D."/>
            <person name="Lin Z."/>
            <person name="Wang Y."/>
            <person name="Elmerich C."/>
            <person name="Lin M."/>
            <person name="Jin Q."/>
        </authorList>
    </citation>
    <scope>NUCLEOTIDE SEQUENCE [LARGE SCALE GENOMIC DNA]</scope>
    <source>
        <strain>A1501</strain>
    </source>
</reference>
<comment type="function">
    <text evidence="1">Specifically methylates the uridine in position 2552 of 23S rRNA at the 2'-O position of the ribose in the fully assembled 50S ribosomal subunit.</text>
</comment>
<comment type="catalytic activity">
    <reaction evidence="1">
        <text>uridine(2552) in 23S rRNA + S-adenosyl-L-methionine = 2'-O-methyluridine(2552) in 23S rRNA + S-adenosyl-L-homocysteine + H(+)</text>
        <dbReference type="Rhea" id="RHEA:42720"/>
        <dbReference type="Rhea" id="RHEA-COMP:10202"/>
        <dbReference type="Rhea" id="RHEA-COMP:10203"/>
        <dbReference type="ChEBI" id="CHEBI:15378"/>
        <dbReference type="ChEBI" id="CHEBI:57856"/>
        <dbReference type="ChEBI" id="CHEBI:59789"/>
        <dbReference type="ChEBI" id="CHEBI:65315"/>
        <dbReference type="ChEBI" id="CHEBI:74478"/>
        <dbReference type="EC" id="2.1.1.166"/>
    </reaction>
</comment>
<comment type="subcellular location">
    <subcellularLocation>
        <location evidence="1">Cytoplasm</location>
    </subcellularLocation>
</comment>
<comment type="similarity">
    <text evidence="1">Belongs to the class I-like SAM-binding methyltransferase superfamily. RNA methyltransferase RlmE family.</text>
</comment>
<comment type="sequence caution" evidence="2">
    <conflict type="erroneous initiation">
        <sequence resource="EMBL-CDS" id="ABP80594"/>
    </conflict>
</comment>
<keyword id="KW-0963">Cytoplasm</keyword>
<keyword id="KW-0489">Methyltransferase</keyword>
<keyword id="KW-1185">Reference proteome</keyword>
<keyword id="KW-0698">rRNA processing</keyword>
<keyword id="KW-0949">S-adenosyl-L-methionine</keyword>
<keyword id="KW-0808">Transferase</keyword>
<proteinExistence type="inferred from homology"/>
<evidence type="ECO:0000255" key="1">
    <source>
        <dbReference type="HAMAP-Rule" id="MF_01547"/>
    </source>
</evidence>
<evidence type="ECO:0000305" key="2"/>
<dbReference type="EC" id="2.1.1.166" evidence="1"/>
<dbReference type="EMBL" id="CP000304">
    <property type="protein sequence ID" value="ABP80594.1"/>
    <property type="status" value="ALT_INIT"/>
    <property type="molecule type" value="Genomic_DNA"/>
</dbReference>
<dbReference type="RefSeq" id="WP_013983571.1">
    <property type="nucleotide sequence ID" value="NC_009434.1"/>
</dbReference>
<dbReference type="SMR" id="A4VNP3"/>
<dbReference type="GeneID" id="66822283"/>
<dbReference type="KEGG" id="psa:PST_2948"/>
<dbReference type="eggNOG" id="COG0293">
    <property type="taxonomic scope" value="Bacteria"/>
</dbReference>
<dbReference type="HOGENOM" id="CLU_009422_4_0_6"/>
<dbReference type="Proteomes" id="UP000000233">
    <property type="component" value="Chromosome"/>
</dbReference>
<dbReference type="GO" id="GO:0005737">
    <property type="term" value="C:cytoplasm"/>
    <property type="evidence" value="ECO:0007669"/>
    <property type="project" value="UniProtKB-SubCell"/>
</dbReference>
<dbReference type="GO" id="GO:0008650">
    <property type="term" value="F:rRNA (uridine-2'-O-)-methyltransferase activity"/>
    <property type="evidence" value="ECO:0007669"/>
    <property type="project" value="UniProtKB-UniRule"/>
</dbReference>
<dbReference type="FunFam" id="3.40.50.150:FF:000005">
    <property type="entry name" value="Ribosomal RNA large subunit methyltransferase E"/>
    <property type="match status" value="1"/>
</dbReference>
<dbReference type="Gene3D" id="3.40.50.150">
    <property type="entry name" value="Vaccinia Virus protein VP39"/>
    <property type="match status" value="1"/>
</dbReference>
<dbReference type="HAMAP" id="MF_01547">
    <property type="entry name" value="RNA_methyltr_E"/>
    <property type="match status" value="1"/>
</dbReference>
<dbReference type="InterPro" id="IPR050082">
    <property type="entry name" value="RNA_methyltr_RlmE"/>
</dbReference>
<dbReference type="InterPro" id="IPR002877">
    <property type="entry name" value="RNA_MeTrfase_FtsJ_dom"/>
</dbReference>
<dbReference type="InterPro" id="IPR015507">
    <property type="entry name" value="rRNA-MeTfrase_E"/>
</dbReference>
<dbReference type="InterPro" id="IPR029063">
    <property type="entry name" value="SAM-dependent_MTases_sf"/>
</dbReference>
<dbReference type="NCBIfam" id="NF008390">
    <property type="entry name" value="PRK11188.1"/>
    <property type="match status" value="1"/>
</dbReference>
<dbReference type="PANTHER" id="PTHR10920">
    <property type="entry name" value="RIBOSOMAL RNA METHYLTRANSFERASE"/>
    <property type="match status" value="1"/>
</dbReference>
<dbReference type="PANTHER" id="PTHR10920:SF18">
    <property type="entry name" value="RRNA METHYLTRANSFERASE 2, MITOCHONDRIAL"/>
    <property type="match status" value="1"/>
</dbReference>
<dbReference type="Pfam" id="PF01728">
    <property type="entry name" value="FtsJ"/>
    <property type="match status" value="1"/>
</dbReference>
<dbReference type="PIRSF" id="PIRSF005461">
    <property type="entry name" value="23S_rRNA_mtase"/>
    <property type="match status" value="1"/>
</dbReference>
<dbReference type="SUPFAM" id="SSF53335">
    <property type="entry name" value="S-adenosyl-L-methionine-dependent methyltransferases"/>
    <property type="match status" value="1"/>
</dbReference>